<reference key="1">
    <citation type="journal article" date="2006" name="Proc. Natl. Acad. Sci. U.S.A.">
        <title>Comparative genomics of the lactic acid bacteria.</title>
        <authorList>
            <person name="Makarova K.S."/>
            <person name="Slesarev A."/>
            <person name="Wolf Y.I."/>
            <person name="Sorokin A."/>
            <person name="Mirkin B."/>
            <person name="Koonin E.V."/>
            <person name="Pavlov A."/>
            <person name="Pavlova N."/>
            <person name="Karamychev V."/>
            <person name="Polouchine N."/>
            <person name="Shakhova V."/>
            <person name="Grigoriev I."/>
            <person name="Lou Y."/>
            <person name="Rohksar D."/>
            <person name="Lucas S."/>
            <person name="Huang K."/>
            <person name="Goodstein D.M."/>
            <person name="Hawkins T."/>
            <person name="Plengvidhya V."/>
            <person name="Welker D."/>
            <person name="Hughes J."/>
            <person name="Goh Y."/>
            <person name="Benson A."/>
            <person name="Baldwin K."/>
            <person name="Lee J.-H."/>
            <person name="Diaz-Muniz I."/>
            <person name="Dosti B."/>
            <person name="Smeianov V."/>
            <person name="Wechter W."/>
            <person name="Barabote R."/>
            <person name="Lorca G."/>
            <person name="Altermann E."/>
            <person name="Barrangou R."/>
            <person name="Ganesan B."/>
            <person name="Xie Y."/>
            <person name="Rawsthorne H."/>
            <person name="Tamir D."/>
            <person name="Parker C."/>
            <person name="Breidt F."/>
            <person name="Broadbent J.R."/>
            <person name="Hutkins R."/>
            <person name="O'Sullivan D."/>
            <person name="Steele J."/>
            <person name="Unlu G."/>
            <person name="Saier M.H. Jr."/>
            <person name="Klaenhammer T."/>
            <person name="Richardson P."/>
            <person name="Kozyavkin S."/>
            <person name="Weimer B.C."/>
            <person name="Mills D.A."/>
        </authorList>
    </citation>
    <scope>NUCLEOTIDE SEQUENCE [LARGE SCALE GENOMIC DNA]</scope>
    <source>
        <strain>ATCC BAA-331 / PSU-1</strain>
    </source>
</reference>
<keyword id="KW-0963">Cytoplasm</keyword>
<keyword id="KW-0489">Methyltransferase</keyword>
<keyword id="KW-1185">Reference proteome</keyword>
<keyword id="KW-0698">rRNA processing</keyword>
<keyword id="KW-0949">S-adenosyl-L-methionine</keyword>
<keyword id="KW-0808">Transferase</keyword>
<dbReference type="EC" id="2.1.1.-" evidence="1"/>
<dbReference type="EMBL" id="CP000411">
    <property type="protein sequence ID" value="ABJ56107.1"/>
    <property type="molecule type" value="Genomic_DNA"/>
</dbReference>
<dbReference type="RefSeq" id="WP_002818025.1">
    <property type="nucleotide sequence ID" value="NC_008528.1"/>
</dbReference>
<dbReference type="SMR" id="Q04HG5"/>
<dbReference type="STRING" id="203123.OEOE_0112"/>
<dbReference type="GeneID" id="75064939"/>
<dbReference type="KEGG" id="ooe:OEOE_0112"/>
<dbReference type="eggNOG" id="COG0357">
    <property type="taxonomic scope" value="Bacteria"/>
</dbReference>
<dbReference type="HOGENOM" id="CLU_065341_0_0_9"/>
<dbReference type="Proteomes" id="UP000000774">
    <property type="component" value="Chromosome"/>
</dbReference>
<dbReference type="GO" id="GO:0005829">
    <property type="term" value="C:cytosol"/>
    <property type="evidence" value="ECO:0007669"/>
    <property type="project" value="TreeGrafter"/>
</dbReference>
<dbReference type="GO" id="GO:0070043">
    <property type="term" value="F:rRNA (guanine-N7-)-methyltransferase activity"/>
    <property type="evidence" value="ECO:0007669"/>
    <property type="project" value="UniProtKB-UniRule"/>
</dbReference>
<dbReference type="CDD" id="cd02440">
    <property type="entry name" value="AdoMet_MTases"/>
    <property type="match status" value="1"/>
</dbReference>
<dbReference type="FunFam" id="3.40.50.150:FF:000041">
    <property type="entry name" value="Ribosomal RNA small subunit methyltransferase G"/>
    <property type="match status" value="1"/>
</dbReference>
<dbReference type="Gene3D" id="3.40.50.150">
    <property type="entry name" value="Vaccinia Virus protein VP39"/>
    <property type="match status" value="1"/>
</dbReference>
<dbReference type="HAMAP" id="MF_00074">
    <property type="entry name" value="16SrRNA_methyltr_G"/>
    <property type="match status" value="1"/>
</dbReference>
<dbReference type="InterPro" id="IPR003682">
    <property type="entry name" value="rRNA_ssu_MeTfrase_G"/>
</dbReference>
<dbReference type="InterPro" id="IPR029063">
    <property type="entry name" value="SAM-dependent_MTases_sf"/>
</dbReference>
<dbReference type="NCBIfam" id="TIGR00138">
    <property type="entry name" value="rsmG_gidB"/>
    <property type="match status" value="1"/>
</dbReference>
<dbReference type="PANTHER" id="PTHR31760">
    <property type="entry name" value="S-ADENOSYL-L-METHIONINE-DEPENDENT METHYLTRANSFERASES SUPERFAMILY PROTEIN"/>
    <property type="match status" value="1"/>
</dbReference>
<dbReference type="PANTHER" id="PTHR31760:SF0">
    <property type="entry name" value="S-ADENOSYL-L-METHIONINE-DEPENDENT METHYLTRANSFERASES SUPERFAMILY PROTEIN"/>
    <property type="match status" value="1"/>
</dbReference>
<dbReference type="Pfam" id="PF02527">
    <property type="entry name" value="GidB"/>
    <property type="match status" value="1"/>
</dbReference>
<dbReference type="SUPFAM" id="SSF53335">
    <property type="entry name" value="S-adenosyl-L-methionine-dependent methyltransferases"/>
    <property type="match status" value="1"/>
</dbReference>
<proteinExistence type="inferred from homology"/>
<sequence>MNPDEFVTTLNNQSLPISNRKMVLFQTYLEFLLEYSKKVNLTAIKEPKDIWLKHFYDSLTPLLYLPDMNKKASLIDIGSGAGFPGVPLKIVNQKFQLTLLDSLQKRIAFLDQLIDKLNLKNVETVHGRAEDFAHNLNYREKYDFAIARAVSNTNTLLELLLPFVKVGGKIILMKTVHVESEIYGASKALEELGGRVSQSFSFELPNDDPRVLITIDKISSTKKRYPRKAGVPEKSPIGGKHD</sequence>
<gene>
    <name evidence="1" type="primary">rsmG</name>
    <name type="ordered locus">OEOE_0112</name>
</gene>
<organism>
    <name type="scientific">Oenococcus oeni (strain ATCC BAA-331 / PSU-1)</name>
    <dbReference type="NCBI Taxonomy" id="203123"/>
    <lineage>
        <taxon>Bacteria</taxon>
        <taxon>Bacillati</taxon>
        <taxon>Bacillota</taxon>
        <taxon>Bacilli</taxon>
        <taxon>Lactobacillales</taxon>
        <taxon>Lactobacillaceae</taxon>
        <taxon>Oenococcus</taxon>
    </lineage>
</organism>
<evidence type="ECO:0000255" key="1">
    <source>
        <dbReference type="HAMAP-Rule" id="MF_00074"/>
    </source>
</evidence>
<evidence type="ECO:0000256" key="2">
    <source>
        <dbReference type="SAM" id="MobiDB-lite"/>
    </source>
</evidence>
<comment type="function">
    <text evidence="1">Specifically methylates the N7 position of a guanine in 16S rRNA.</text>
</comment>
<comment type="subcellular location">
    <subcellularLocation>
        <location evidence="1">Cytoplasm</location>
    </subcellularLocation>
</comment>
<comment type="similarity">
    <text evidence="1">Belongs to the methyltransferase superfamily. RNA methyltransferase RsmG family.</text>
</comment>
<protein>
    <recommendedName>
        <fullName evidence="1">Ribosomal RNA small subunit methyltransferase G</fullName>
        <ecNumber evidence="1">2.1.1.-</ecNumber>
    </recommendedName>
    <alternativeName>
        <fullName evidence="1">16S rRNA 7-methylguanosine methyltransferase</fullName>
        <shortName evidence="1">16S rRNA m7G methyltransferase</shortName>
    </alternativeName>
</protein>
<name>RSMG_OENOB</name>
<accession>Q04HG5</accession>
<feature type="chain" id="PRO_1000010176" description="Ribosomal RNA small subunit methyltransferase G">
    <location>
        <begin position="1"/>
        <end position="242"/>
    </location>
</feature>
<feature type="region of interest" description="Disordered" evidence="2">
    <location>
        <begin position="221"/>
        <end position="242"/>
    </location>
</feature>
<feature type="binding site" evidence="1">
    <location>
        <position position="78"/>
    </location>
    <ligand>
        <name>S-adenosyl-L-methionine</name>
        <dbReference type="ChEBI" id="CHEBI:59789"/>
    </ligand>
</feature>
<feature type="binding site" evidence="1">
    <location>
        <position position="83"/>
    </location>
    <ligand>
        <name>S-adenosyl-L-methionine</name>
        <dbReference type="ChEBI" id="CHEBI:59789"/>
    </ligand>
</feature>
<feature type="binding site" evidence="1">
    <location>
        <begin position="129"/>
        <end position="130"/>
    </location>
    <ligand>
        <name>S-adenosyl-L-methionine</name>
        <dbReference type="ChEBI" id="CHEBI:59789"/>
    </ligand>
</feature>
<feature type="binding site" evidence="1">
    <location>
        <position position="148"/>
    </location>
    <ligand>
        <name>S-adenosyl-L-methionine</name>
        <dbReference type="ChEBI" id="CHEBI:59789"/>
    </ligand>
</feature>